<protein>
    <recommendedName>
        <fullName evidence="1">Aspartyl/glutamyl-tRNA(Asn/Gln) amidotransferase subunit C</fullName>
        <shortName evidence="1">Asp/Glu-ADT subunit C</shortName>
        <ecNumber evidence="1">6.3.5.-</ecNumber>
    </recommendedName>
</protein>
<organism>
    <name type="scientific">Mycobacterium leprae (strain Br4923)</name>
    <dbReference type="NCBI Taxonomy" id="561304"/>
    <lineage>
        <taxon>Bacteria</taxon>
        <taxon>Bacillati</taxon>
        <taxon>Actinomycetota</taxon>
        <taxon>Actinomycetes</taxon>
        <taxon>Mycobacteriales</taxon>
        <taxon>Mycobacteriaceae</taxon>
        <taxon>Mycobacterium</taxon>
    </lineage>
</organism>
<reference key="1">
    <citation type="journal article" date="2009" name="Nat. Genet.">
        <title>Comparative genomic and phylogeographic analysis of Mycobacterium leprae.</title>
        <authorList>
            <person name="Monot M."/>
            <person name="Honore N."/>
            <person name="Garnier T."/>
            <person name="Zidane N."/>
            <person name="Sherafi D."/>
            <person name="Paniz-Mondolfi A."/>
            <person name="Matsuoka M."/>
            <person name="Taylor G.M."/>
            <person name="Donoghue H.D."/>
            <person name="Bouwman A."/>
            <person name="Mays S."/>
            <person name="Watson C."/>
            <person name="Lockwood D."/>
            <person name="Khamispour A."/>
            <person name="Dowlati Y."/>
            <person name="Jianping S."/>
            <person name="Rea T.H."/>
            <person name="Vera-Cabrera L."/>
            <person name="Stefani M.M."/>
            <person name="Banu S."/>
            <person name="Macdonald M."/>
            <person name="Sapkota B.R."/>
            <person name="Spencer J.S."/>
            <person name="Thomas J."/>
            <person name="Harshman K."/>
            <person name="Singh P."/>
            <person name="Busso P."/>
            <person name="Gattiker A."/>
            <person name="Rougemont J."/>
            <person name="Brennan P.J."/>
            <person name="Cole S.T."/>
        </authorList>
    </citation>
    <scope>NUCLEOTIDE SEQUENCE [LARGE SCALE GENOMIC DNA]</scope>
    <source>
        <strain>Br4923</strain>
    </source>
</reference>
<proteinExistence type="inferred from homology"/>
<evidence type="ECO:0000255" key="1">
    <source>
        <dbReference type="HAMAP-Rule" id="MF_00122"/>
    </source>
</evidence>
<sequence>MSPISRDEVLHLARLTRLVLTDTELASFSSQLDVILAHVSQIQAVDVTGVEPTDNPLKYVNITRPDETVPCLTQQQALAEAPEAIYGRFVVPQILGDNK</sequence>
<keyword id="KW-0067">ATP-binding</keyword>
<keyword id="KW-0436">Ligase</keyword>
<keyword id="KW-0547">Nucleotide-binding</keyword>
<keyword id="KW-0648">Protein biosynthesis</keyword>
<name>GATC_MYCLB</name>
<comment type="function">
    <text evidence="1">Allows the formation of correctly charged Asn-tRNA(Asn) or Gln-tRNA(Gln) through the transamidation of misacylated Asp-tRNA(Asn) or Glu-tRNA(Gln) in organisms which lack either or both of asparaginyl-tRNA or glutaminyl-tRNA synthetases. The reaction takes place in the presence of glutamine and ATP through an activated phospho-Asp-tRNA(Asn) or phospho-Glu-tRNA(Gln).</text>
</comment>
<comment type="catalytic activity">
    <reaction evidence="1">
        <text>L-glutamyl-tRNA(Gln) + L-glutamine + ATP + H2O = L-glutaminyl-tRNA(Gln) + L-glutamate + ADP + phosphate + H(+)</text>
        <dbReference type="Rhea" id="RHEA:17521"/>
        <dbReference type="Rhea" id="RHEA-COMP:9681"/>
        <dbReference type="Rhea" id="RHEA-COMP:9684"/>
        <dbReference type="ChEBI" id="CHEBI:15377"/>
        <dbReference type="ChEBI" id="CHEBI:15378"/>
        <dbReference type="ChEBI" id="CHEBI:29985"/>
        <dbReference type="ChEBI" id="CHEBI:30616"/>
        <dbReference type="ChEBI" id="CHEBI:43474"/>
        <dbReference type="ChEBI" id="CHEBI:58359"/>
        <dbReference type="ChEBI" id="CHEBI:78520"/>
        <dbReference type="ChEBI" id="CHEBI:78521"/>
        <dbReference type="ChEBI" id="CHEBI:456216"/>
    </reaction>
</comment>
<comment type="catalytic activity">
    <reaction evidence="1">
        <text>L-aspartyl-tRNA(Asn) + L-glutamine + ATP + H2O = L-asparaginyl-tRNA(Asn) + L-glutamate + ADP + phosphate + 2 H(+)</text>
        <dbReference type="Rhea" id="RHEA:14513"/>
        <dbReference type="Rhea" id="RHEA-COMP:9674"/>
        <dbReference type="Rhea" id="RHEA-COMP:9677"/>
        <dbReference type="ChEBI" id="CHEBI:15377"/>
        <dbReference type="ChEBI" id="CHEBI:15378"/>
        <dbReference type="ChEBI" id="CHEBI:29985"/>
        <dbReference type="ChEBI" id="CHEBI:30616"/>
        <dbReference type="ChEBI" id="CHEBI:43474"/>
        <dbReference type="ChEBI" id="CHEBI:58359"/>
        <dbReference type="ChEBI" id="CHEBI:78515"/>
        <dbReference type="ChEBI" id="CHEBI:78516"/>
        <dbReference type="ChEBI" id="CHEBI:456216"/>
    </reaction>
</comment>
<comment type="subunit">
    <text evidence="1">Heterotrimer of A, B and C subunits.</text>
</comment>
<comment type="similarity">
    <text evidence="1">Belongs to the GatC family.</text>
</comment>
<feature type="chain" id="PRO_1000122576" description="Aspartyl/glutamyl-tRNA(Asn/Gln) amidotransferase subunit C">
    <location>
        <begin position="1"/>
        <end position="99"/>
    </location>
</feature>
<dbReference type="EC" id="6.3.5.-" evidence="1"/>
<dbReference type="EMBL" id="FM211192">
    <property type="protein sequence ID" value="CAR71798.1"/>
    <property type="molecule type" value="Genomic_DNA"/>
</dbReference>
<dbReference type="SMR" id="B8ZS25"/>
<dbReference type="KEGG" id="mlb:MLBr01703"/>
<dbReference type="HOGENOM" id="CLU_105899_1_0_11"/>
<dbReference type="Proteomes" id="UP000006900">
    <property type="component" value="Chromosome"/>
</dbReference>
<dbReference type="GO" id="GO:0050566">
    <property type="term" value="F:asparaginyl-tRNA synthase (glutamine-hydrolyzing) activity"/>
    <property type="evidence" value="ECO:0007669"/>
    <property type="project" value="RHEA"/>
</dbReference>
<dbReference type="GO" id="GO:0005524">
    <property type="term" value="F:ATP binding"/>
    <property type="evidence" value="ECO:0007669"/>
    <property type="project" value="UniProtKB-KW"/>
</dbReference>
<dbReference type="GO" id="GO:0050567">
    <property type="term" value="F:glutaminyl-tRNA synthase (glutamine-hydrolyzing) activity"/>
    <property type="evidence" value="ECO:0007669"/>
    <property type="project" value="UniProtKB-UniRule"/>
</dbReference>
<dbReference type="GO" id="GO:0070681">
    <property type="term" value="P:glutaminyl-tRNAGln biosynthesis via transamidation"/>
    <property type="evidence" value="ECO:0007669"/>
    <property type="project" value="TreeGrafter"/>
</dbReference>
<dbReference type="GO" id="GO:0006450">
    <property type="term" value="P:regulation of translational fidelity"/>
    <property type="evidence" value="ECO:0007669"/>
    <property type="project" value="InterPro"/>
</dbReference>
<dbReference type="GO" id="GO:0006412">
    <property type="term" value="P:translation"/>
    <property type="evidence" value="ECO:0007669"/>
    <property type="project" value="UniProtKB-UniRule"/>
</dbReference>
<dbReference type="Gene3D" id="1.10.20.60">
    <property type="entry name" value="Glu-tRNAGln amidotransferase C subunit, N-terminal domain"/>
    <property type="match status" value="1"/>
</dbReference>
<dbReference type="HAMAP" id="MF_00122">
    <property type="entry name" value="GatC"/>
    <property type="match status" value="1"/>
</dbReference>
<dbReference type="InterPro" id="IPR036113">
    <property type="entry name" value="Asp/Glu-ADT_sf_sub_c"/>
</dbReference>
<dbReference type="InterPro" id="IPR003837">
    <property type="entry name" value="GatC"/>
</dbReference>
<dbReference type="NCBIfam" id="TIGR00135">
    <property type="entry name" value="gatC"/>
    <property type="match status" value="1"/>
</dbReference>
<dbReference type="PANTHER" id="PTHR15004">
    <property type="entry name" value="GLUTAMYL-TRNA(GLN) AMIDOTRANSFERASE SUBUNIT C, MITOCHONDRIAL"/>
    <property type="match status" value="1"/>
</dbReference>
<dbReference type="PANTHER" id="PTHR15004:SF0">
    <property type="entry name" value="GLUTAMYL-TRNA(GLN) AMIDOTRANSFERASE SUBUNIT C, MITOCHONDRIAL"/>
    <property type="match status" value="1"/>
</dbReference>
<dbReference type="Pfam" id="PF02686">
    <property type="entry name" value="GatC"/>
    <property type="match status" value="1"/>
</dbReference>
<dbReference type="SUPFAM" id="SSF141000">
    <property type="entry name" value="Glu-tRNAGln amidotransferase C subunit"/>
    <property type="match status" value="1"/>
</dbReference>
<gene>
    <name evidence="1" type="primary">gatC</name>
    <name type="ordered locus">MLBr01703</name>
</gene>
<accession>B8ZS25</accession>